<gene>
    <name evidence="1" type="primary">murB</name>
    <name type="ordered locus">XAC1804</name>
</gene>
<organism>
    <name type="scientific">Xanthomonas axonopodis pv. citri (strain 306)</name>
    <dbReference type="NCBI Taxonomy" id="190486"/>
    <lineage>
        <taxon>Bacteria</taxon>
        <taxon>Pseudomonadati</taxon>
        <taxon>Pseudomonadota</taxon>
        <taxon>Gammaproteobacteria</taxon>
        <taxon>Lysobacterales</taxon>
        <taxon>Lysobacteraceae</taxon>
        <taxon>Xanthomonas</taxon>
    </lineage>
</organism>
<proteinExistence type="inferred from homology"/>
<comment type="function">
    <text evidence="1">Cell wall formation.</text>
</comment>
<comment type="catalytic activity">
    <reaction evidence="1">
        <text>UDP-N-acetyl-alpha-D-muramate + NADP(+) = UDP-N-acetyl-3-O-(1-carboxyvinyl)-alpha-D-glucosamine + NADPH + H(+)</text>
        <dbReference type="Rhea" id="RHEA:12248"/>
        <dbReference type="ChEBI" id="CHEBI:15378"/>
        <dbReference type="ChEBI" id="CHEBI:57783"/>
        <dbReference type="ChEBI" id="CHEBI:58349"/>
        <dbReference type="ChEBI" id="CHEBI:68483"/>
        <dbReference type="ChEBI" id="CHEBI:70757"/>
        <dbReference type="EC" id="1.3.1.98"/>
    </reaction>
</comment>
<comment type="cofactor">
    <cofactor evidence="1">
        <name>FAD</name>
        <dbReference type="ChEBI" id="CHEBI:57692"/>
    </cofactor>
</comment>
<comment type="pathway">
    <text evidence="1">Cell wall biogenesis; peptidoglycan biosynthesis.</text>
</comment>
<comment type="subcellular location">
    <subcellularLocation>
        <location evidence="1">Cytoplasm</location>
    </subcellularLocation>
</comment>
<comment type="similarity">
    <text evidence="1">Belongs to the MurB family.</text>
</comment>
<dbReference type="EC" id="1.3.1.98" evidence="1"/>
<dbReference type="EMBL" id="AE008923">
    <property type="protein sequence ID" value="AAM36667.1"/>
    <property type="molecule type" value="Genomic_DNA"/>
</dbReference>
<dbReference type="RefSeq" id="WP_011051151.1">
    <property type="nucleotide sequence ID" value="NC_003919.1"/>
</dbReference>
<dbReference type="SMR" id="Q8PLJ3"/>
<dbReference type="GeneID" id="66910951"/>
<dbReference type="KEGG" id="xac:XAC1804"/>
<dbReference type="eggNOG" id="COG0812">
    <property type="taxonomic scope" value="Bacteria"/>
</dbReference>
<dbReference type="HOGENOM" id="CLU_035304_0_0_6"/>
<dbReference type="UniPathway" id="UPA00219"/>
<dbReference type="Proteomes" id="UP000000576">
    <property type="component" value="Chromosome"/>
</dbReference>
<dbReference type="GO" id="GO:0005829">
    <property type="term" value="C:cytosol"/>
    <property type="evidence" value="ECO:0007669"/>
    <property type="project" value="TreeGrafter"/>
</dbReference>
<dbReference type="GO" id="GO:0071949">
    <property type="term" value="F:FAD binding"/>
    <property type="evidence" value="ECO:0007669"/>
    <property type="project" value="InterPro"/>
</dbReference>
<dbReference type="GO" id="GO:0008762">
    <property type="term" value="F:UDP-N-acetylmuramate dehydrogenase activity"/>
    <property type="evidence" value="ECO:0007669"/>
    <property type="project" value="UniProtKB-UniRule"/>
</dbReference>
<dbReference type="GO" id="GO:0051301">
    <property type="term" value="P:cell division"/>
    <property type="evidence" value="ECO:0007669"/>
    <property type="project" value="UniProtKB-KW"/>
</dbReference>
<dbReference type="GO" id="GO:0071555">
    <property type="term" value="P:cell wall organization"/>
    <property type="evidence" value="ECO:0007669"/>
    <property type="project" value="UniProtKB-KW"/>
</dbReference>
<dbReference type="GO" id="GO:0009252">
    <property type="term" value="P:peptidoglycan biosynthetic process"/>
    <property type="evidence" value="ECO:0007669"/>
    <property type="project" value="UniProtKB-UniRule"/>
</dbReference>
<dbReference type="GO" id="GO:0008360">
    <property type="term" value="P:regulation of cell shape"/>
    <property type="evidence" value="ECO:0007669"/>
    <property type="project" value="UniProtKB-KW"/>
</dbReference>
<dbReference type="Gene3D" id="3.30.465.10">
    <property type="match status" value="1"/>
</dbReference>
<dbReference type="Gene3D" id="3.90.78.10">
    <property type="entry name" value="UDP-N-acetylenolpyruvoylglucosamine reductase, C-terminal domain"/>
    <property type="match status" value="1"/>
</dbReference>
<dbReference type="Gene3D" id="3.30.43.10">
    <property type="entry name" value="Uridine Diphospho-n-acetylenolpyruvylglucosamine Reductase, domain 2"/>
    <property type="match status" value="1"/>
</dbReference>
<dbReference type="HAMAP" id="MF_00037">
    <property type="entry name" value="MurB"/>
    <property type="match status" value="1"/>
</dbReference>
<dbReference type="InterPro" id="IPR016166">
    <property type="entry name" value="FAD-bd_PCMH"/>
</dbReference>
<dbReference type="InterPro" id="IPR036318">
    <property type="entry name" value="FAD-bd_PCMH-like_sf"/>
</dbReference>
<dbReference type="InterPro" id="IPR016167">
    <property type="entry name" value="FAD-bd_PCMH_sub1"/>
</dbReference>
<dbReference type="InterPro" id="IPR016169">
    <property type="entry name" value="FAD-bd_PCMH_sub2"/>
</dbReference>
<dbReference type="InterPro" id="IPR003170">
    <property type="entry name" value="MurB"/>
</dbReference>
<dbReference type="InterPro" id="IPR011601">
    <property type="entry name" value="MurB_C"/>
</dbReference>
<dbReference type="InterPro" id="IPR036635">
    <property type="entry name" value="MurB_C_sf"/>
</dbReference>
<dbReference type="InterPro" id="IPR006094">
    <property type="entry name" value="Oxid_FAD_bind_N"/>
</dbReference>
<dbReference type="NCBIfam" id="TIGR00179">
    <property type="entry name" value="murB"/>
    <property type="match status" value="1"/>
</dbReference>
<dbReference type="NCBIfam" id="NF000755">
    <property type="entry name" value="PRK00046.1"/>
    <property type="match status" value="1"/>
</dbReference>
<dbReference type="NCBIfam" id="NF010478">
    <property type="entry name" value="PRK13903.1"/>
    <property type="match status" value="1"/>
</dbReference>
<dbReference type="PANTHER" id="PTHR21071">
    <property type="entry name" value="UDP-N-ACETYLENOLPYRUVOYLGLUCOSAMINE REDUCTASE"/>
    <property type="match status" value="1"/>
</dbReference>
<dbReference type="PANTHER" id="PTHR21071:SF4">
    <property type="entry name" value="UDP-N-ACETYLENOLPYRUVOYLGLUCOSAMINE REDUCTASE"/>
    <property type="match status" value="1"/>
</dbReference>
<dbReference type="Pfam" id="PF01565">
    <property type="entry name" value="FAD_binding_4"/>
    <property type="match status" value="1"/>
</dbReference>
<dbReference type="Pfam" id="PF02873">
    <property type="entry name" value="MurB_C"/>
    <property type="match status" value="1"/>
</dbReference>
<dbReference type="SUPFAM" id="SSF56176">
    <property type="entry name" value="FAD-binding/transporter-associated domain-like"/>
    <property type="match status" value="1"/>
</dbReference>
<dbReference type="SUPFAM" id="SSF56194">
    <property type="entry name" value="Uridine diphospho-N-Acetylenolpyruvylglucosamine reductase, MurB, C-terminal domain"/>
    <property type="match status" value="1"/>
</dbReference>
<dbReference type="PROSITE" id="PS51387">
    <property type="entry name" value="FAD_PCMH"/>
    <property type="match status" value="1"/>
</dbReference>
<accession>Q8PLJ3</accession>
<name>MURB_XANAC</name>
<protein>
    <recommendedName>
        <fullName evidence="1">UDP-N-acetylenolpyruvoylglucosamine reductase</fullName>
        <ecNumber evidence="1">1.3.1.98</ecNumber>
    </recommendedName>
    <alternativeName>
        <fullName evidence="1">UDP-N-acetylmuramate dehydrogenase</fullName>
    </alternativeName>
</protein>
<reference key="1">
    <citation type="journal article" date="2002" name="Nature">
        <title>Comparison of the genomes of two Xanthomonas pathogens with differing host specificities.</title>
        <authorList>
            <person name="da Silva A.C.R."/>
            <person name="Ferro J.A."/>
            <person name="Reinach F.C."/>
            <person name="Farah C.S."/>
            <person name="Furlan L.R."/>
            <person name="Quaggio R.B."/>
            <person name="Monteiro-Vitorello C.B."/>
            <person name="Van Sluys M.A."/>
            <person name="Almeida N.F. Jr."/>
            <person name="Alves L.M.C."/>
            <person name="do Amaral A.M."/>
            <person name="Bertolini M.C."/>
            <person name="Camargo L.E.A."/>
            <person name="Camarotte G."/>
            <person name="Cannavan F."/>
            <person name="Cardozo J."/>
            <person name="Chambergo F."/>
            <person name="Ciapina L.P."/>
            <person name="Cicarelli R.M.B."/>
            <person name="Coutinho L.L."/>
            <person name="Cursino-Santos J.R."/>
            <person name="El-Dorry H."/>
            <person name="Faria J.B."/>
            <person name="Ferreira A.J.S."/>
            <person name="Ferreira R.C.C."/>
            <person name="Ferro M.I.T."/>
            <person name="Formighieri E.F."/>
            <person name="Franco M.C."/>
            <person name="Greggio C.C."/>
            <person name="Gruber A."/>
            <person name="Katsuyama A.M."/>
            <person name="Kishi L.T."/>
            <person name="Leite R.P."/>
            <person name="Lemos E.G.M."/>
            <person name="Lemos M.V.F."/>
            <person name="Locali E.C."/>
            <person name="Machado M.A."/>
            <person name="Madeira A.M.B.N."/>
            <person name="Martinez-Rossi N.M."/>
            <person name="Martins E.C."/>
            <person name="Meidanis J."/>
            <person name="Menck C.F.M."/>
            <person name="Miyaki C.Y."/>
            <person name="Moon D.H."/>
            <person name="Moreira L.M."/>
            <person name="Novo M.T.M."/>
            <person name="Okura V.K."/>
            <person name="Oliveira M.C."/>
            <person name="Oliveira V.R."/>
            <person name="Pereira H.A."/>
            <person name="Rossi A."/>
            <person name="Sena J.A.D."/>
            <person name="Silva C."/>
            <person name="de Souza R.F."/>
            <person name="Spinola L.A.F."/>
            <person name="Takita M.A."/>
            <person name="Tamura R.E."/>
            <person name="Teixeira E.C."/>
            <person name="Tezza R.I.D."/>
            <person name="Trindade dos Santos M."/>
            <person name="Truffi D."/>
            <person name="Tsai S.M."/>
            <person name="White F.F."/>
            <person name="Setubal J.C."/>
            <person name="Kitajima J.P."/>
        </authorList>
    </citation>
    <scope>NUCLEOTIDE SEQUENCE [LARGE SCALE GENOMIC DNA]</scope>
    <source>
        <strain>306</strain>
    </source>
</reference>
<evidence type="ECO:0000255" key="1">
    <source>
        <dbReference type="HAMAP-Rule" id="MF_00037"/>
    </source>
</evidence>
<keyword id="KW-0131">Cell cycle</keyword>
<keyword id="KW-0132">Cell division</keyword>
<keyword id="KW-0133">Cell shape</keyword>
<keyword id="KW-0961">Cell wall biogenesis/degradation</keyword>
<keyword id="KW-0963">Cytoplasm</keyword>
<keyword id="KW-0274">FAD</keyword>
<keyword id="KW-0285">Flavoprotein</keyword>
<keyword id="KW-0521">NADP</keyword>
<keyword id="KW-0560">Oxidoreductase</keyword>
<keyword id="KW-0573">Peptidoglycan synthesis</keyword>
<feature type="chain" id="PRO_0000179292" description="UDP-N-acetylenolpyruvoylglucosamine reductase">
    <location>
        <begin position="1"/>
        <end position="350"/>
    </location>
</feature>
<feature type="domain" description="FAD-binding PCMH-type" evidence="1">
    <location>
        <begin position="24"/>
        <end position="195"/>
    </location>
</feature>
<feature type="active site" evidence="1">
    <location>
        <position position="172"/>
    </location>
</feature>
<feature type="active site" description="Proton donor" evidence="1">
    <location>
        <position position="245"/>
    </location>
</feature>
<feature type="active site" evidence="1">
    <location>
        <position position="342"/>
    </location>
</feature>
<sequence length="350" mass="37701">MSDAVQTGWQLSEQAPLRTLNTFHVEATARWLLNVQAPEALPQALAAPEIAGQPLLVLGSGSNVLLAGDPPGCVLCFDNRETSIIAHRADHAIVRAGAGVNWHALVLYALQQGLSGLENLALIPGTVGACPIQNIGAYGAQVGDFIHVVEAFDRHSQQFVRLDAADCAFGYRDSVFKQQPERYLIVAVEFNLPLLHELRLDYAGIREELASMGAELAGAADVAQAVINIRRRKLPDPDVLGNAGSFFKNPLLPSEQIAALQASFADMPVYPGEHAGQGKLSAAWLIEQCGWKGKREGDAGVSPDHALVLVNYGTATGAQLLDFARRIAESVRERYSVILEPEPRIIGAHW</sequence>